<gene>
    <name evidence="1" type="primary">accD</name>
    <name type="ordered locus">P9515_07971</name>
</gene>
<proteinExistence type="inferred from homology"/>
<dbReference type="EC" id="2.1.3.15" evidence="1"/>
<dbReference type="EMBL" id="CP000552">
    <property type="protein sequence ID" value="ABM72006.1"/>
    <property type="molecule type" value="Genomic_DNA"/>
</dbReference>
<dbReference type="RefSeq" id="WP_011820111.1">
    <property type="nucleotide sequence ID" value="NC_008817.1"/>
</dbReference>
<dbReference type="SMR" id="A2BW45"/>
<dbReference type="STRING" id="167542.P9515_07971"/>
<dbReference type="GeneID" id="60201922"/>
<dbReference type="KEGG" id="pmc:P9515_07971"/>
<dbReference type="eggNOG" id="COG0777">
    <property type="taxonomic scope" value="Bacteria"/>
</dbReference>
<dbReference type="HOGENOM" id="CLU_015486_1_1_3"/>
<dbReference type="OrthoDB" id="9772975at2"/>
<dbReference type="UniPathway" id="UPA00655">
    <property type="reaction ID" value="UER00711"/>
</dbReference>
<dbReference type="Proteomes" id="UP000001589">
    <property type="component" value="Chromosome"/>
</dbReference>
<dbReference type="GO" id="GO:0009317">
    <property type="term" value="C:acetyl-CoA carboxylase complex"/>
    <property type="evidence" value="ECO:0007669"/>
    <property type="project" value="InterPro"/>
</dbReference>
<dbReference type="GO" id="GO:0003989">
    <property type="term" value="F:acetyl-CoA carboxylase activity"/>
    <property type="evidence" value="ECO:0007669"/>
    <property type="project" value="InterPro"/>
</dbReference>
<dbReference type="GO" id="GO:0005524">
    <property type="term" value="F:ATP binding"/>
    <property type="evidence" value="ECO:0007669"/>
    <property type="project" value="UniProtKB-KW"/>
</dbReference>
<dbReference type="GO" id="GO:0016743">
    <property type="term" value="F:carboxyl- or carbamoyltransferase activity"/>
    <property type="evidence" value="ECO:0007669"/>
    <property type="project" value="UniProtKB-UniRule"/>
</dbReference>
<dbReference type="GO" id="GO:0008270">
    <property type="term" value="F:zinc ion binding"/>
    <property type="evidence" value="ECO:0007669"/>
    <property type="project" value="UniProtKB-UniRule"/>
</dbReference>
<dbReference type="GO" id="GO:0006633">
    <property type="term" value="P:fatty acid biosynthetic process"/>
    <property type="evidence" value="ECO:0007669"/>
    <property type="project" value="UniProtKB-KW"/>
</dbReference>
<dbReference type="GO" id="GO:2001295">
    <property type="term" value="P:malonyl-CoA biosynthetic process"/>
    <property type="evidence" value="ECO:0007669"/>
    <property type="project" value="UniProtKB-UniRule"/>
</dbReference>
<dbReference type="Gene3D" id="3.90.226.10">
    <property type="entry name" value="2-enoyl-CoA Hydratase, Chain A, domain 1"/>
    <property type="match status" value="1"/>
</dbReference>
<dbReference type="HAMAP" id="MF_01395">
    <property type="entry name" value="AcetylCoA_CT_beta"/>
    <property type="match status" value="1"/>
</dbReference>
<dbReference type="InterPro" id="IPR034733">
    <property type="entry name" value="AcCoA_carboxyl_beta"/>
</dbReference>
<dbReference type="InterPro" id="IPR000438">
    <property type="entry name" value="Acetyl_CoA_COase_Trfase_b_su"/>
</dbReference>
<dbReference type="InterPro" id="IPR029045">
    <property type="entry name" value="ClpP/crotonase-like_dom_sf"/>
</dbReference>
<dbReference type="InterPro" id="IPR011762">
    <property type="entry name" value="COA_CT_N"/>
</dbReference>
<dbReference type="InterPro" id="IPR041010">
    <property type="entry name" value="Znf-ACC"/>
</dbReference>
<dbReference type="NCBIfam" id="TIGR00515">
    <property type="entry name" value="accD"/>
    <property type="match status" value="1"/>
</dbReference>
<dbReference type="PANTHER" id="PTHR42995">
    <property type="entry name" value="ACETYL-COENZYME A CARBOXYLASE CARBOXYL TRANSFERASE SUBUNIT BETA, CHLOROPLASTIC"/>
    <property type="match status" value="1"/>
</dbReference>
<dbReference type="PANTHER" id="PTHR42995:SF5">
    <property type="entry name" value="ACETYL-COENZYME A CARBOXYLASE CARBOXYL TRANSFERASE SUBUNIT BETA, CHLOROPLASTIC"/>
    <property type="match status" value="1"/>
</dbReference>
<dbReference type="Pfam" id="PF01039">
    <property type="entry name" value="Carboxyl_trans"/>
    <property type="match status" value="1"/>
</dbReference>
<dbReference type="Pfam" id="PF17848">
    <property type="entry name" value="Zn_ribbon_ACC"/>
    <property type="match status" value="1"/>
</dbReference>
<dbReference type="PRINTS" id="PR01070">
    <property type="entry name" value="ACCCTRFRASEB"/>
</dbReference>
<dbReference type="SUPFAM" id="SSF52096">
    <property type="entry name" value="ClpP/crotonase"/>
    <property type="match status" value="1"/>
</dbReference>
<dbReference type="PROSITE" id="PS50980">
    <property type="entry name" value="COA_CT_NTER"/>
    <property type="match status" value="1"/>
</dbReference>
<reference key="1">
    <citation type="journal article" date="2007" name="PLoS Genet.">
        <title>Patterns and implications of gene gain and loss in the evolution of Prochlorococcus.</title>
        <authorList>
            <person name="Kettler G.C."/>
            <person name="Martiny A.C."/>
            <person name="Huang K."/>
            <person name="Zucker J."/>
            <person name="Coleman M.L."/>
            <person name="Rodrigue S."/>
            <person name="Chen F."/>
            <person name="Lapidus A."/>
            <person name="Ferriera S."/>
            <person name="Johnson J."/>
            <person name="Steglich C."/>
            <person name="Church G.M."/>
            <person name="Richardson P."/>
            <person name="Chisholm S.W."/>
        </authorList>
    </citation>
    <scope>NUCLEOTIDE SEQUENCE [LARGE SCALE GENOMIC DNA]</scope>
    <source>
        <strain>MIT 9515</strain>
    </source>
</reference>
<evidence type="ECO:0000255" key="1">
    <source>
        <dbReference type="HAMAP-Rule" id="MF_01395"/>
    </source>
</evidence>
<evidence type="ECO:0000255" key="2">
    <source>
        <dbReference type="PROSITE-ProRule" id="PRU01136"/>
    </source>
</evidence>
<organism>
    <name type="scientific">Prochlorococcus marinus (strain MIT 9515)</name>
    <dbReference type="NCBI Taxonomy" id="167542"/>
    <lineage>
        <taxon>Bacteria</taxon>
        <taxon>Bacillati</taxon>
        <taxon>Cyanobacteriota</taxon>
        <taxon>Cyanophyceae</taxon>
        <taxon>Synechococcales</taxon>
        <taxon>Prochlorococcaceae</taxon>
        <taxon>Prochlorococcus</taxon>
    </lineage>
</organism>
<comment type="function">
    <text evidence="1">Component of the acetyl coenzyme A carboxylase (ACC) complex. Biotin carboxylase (BC) catalyzes the carboxylation of biotin on its carrier protein (BCCP) and then the CO(2) group is transferred by the transcarboxylase to acetyl-CoA to form malonyl-CoA.</text>
</comment>
<comment type="catalytic activity">
    <reaction evidence="1">
        <text>N(6)-carboxybiotinyl-L-lysyl-[protein] + acetyl-CoA = N(6)-biotinyl-L-lysyl-[protein] + malonyl-CoA</text>
        <dbReference type="Rhea" id="RHEA:54728"/>
        <dbReference type="Rhea" id="RHEA-COMP:10505"/>
        <dbReference type="Rhea" id="RHEA-COMP:10506"/>
        <dbReference type="ChEBI" id="CHEBI:57288"/>
        <dbReference type="ChEBI" id="CHEBI:57384"/>
        <dbReference type="ChEBI" id="CHEBI:83144"/>
        <dbReference type="ChEBI" id="CHEBI:83145"/>
        <dbReference type="EC" id="2.1.3.15"/>
    </reaction>
</comment>
<comment type="cofactor">
    <cofactor evidence="1">
        <name>Zn(2+)</name>
        <dbReference type="ChEBI" id="CHEBI:29105"/>
    </cofactor>
    <text evidence="1">Binds 1 zinc ion per subunit.</text>
</comment>
<comment type="pathway">
    <text evidence="1">Lipid metabolism; malonyl-CoA biosynthesis; malonyl-CoA from acetyl-CoA: step 1/1.</text>
</comment>
<comment type="subunit">
    <text evidence="1">Acetyl-CoA carboxylase is a heterohexamer composed of biotin carboxyl carrier protein (AccB), biotin carboxylase (AccC) and two subunits each of ACCase subunit alpha (AccA) and ACCase subunit beta (AccD).</text>
</comment>
<comment type="subcellular location">
    <subcellularLocation>
        <location evidence="1">Cytoplasm</location>
    </subcellularLocation>
</comment>
<comment type="similarity">
    <text evidence="1">Belongs to the AccD/PCCB family.</text>
</comment>
<protein>
    <recommendedName>
        <fullName evidence="1">Acetyl-coenzyme A carboxylase carboxyl transferase subunit beta</fullName>
        <shortName evidence="1">ACCase subunit beta</shortName>
        <shortName evidence="1">Acetyl-CoA carboxylase carboxyltransferase subunit beta</shortName>
        <ecNumber evidence="1">2.1.3.15</ecNumber>
    </recommendedName>
</protein>
<keyword id="KW-0067">ATP-binding</keyword>
<keyword id="KW-0963">Cytoplasm</keyword>
<keyword id="KW-0275">Fatty acid biosynthesis</keyword>
<keyword id="KW-0276">Fatty acid metabolism</keyword>
<keyword id="KW-0444">Lipid biosynthesis</keyword>
<keyword id="KW-0443">Lipid metabolism</keyword>
<keyword id="KW-0479">Metal-binding</keyword>
<keyword id="KW-0547">Nucleotide-binding</keyword>
<keyword id="KW-0808">Transferase</keyword>
<keyword id="KW-0862">Zinc</keyword>
<keyword id="KW-0863">Zinc-finger</keyword>
<accession>A2BW45</accession>
<feature type="chain" id="PRO_0000359025" description="Acetyl-coenzyme A carboxylase carboxyl transferase subunit beta">
    <location>
        <begin position="1"/>
        <end position="292"/>
    </location>
</feature>
<feature type="domain" description="CoA carboxyltransferase N-terminal" evidence="2">
    <location>
        <begin position="29"/>
        <end position="292"/>
    </location>
</feature>
<feature type="zinc finger region" description="C4-type" evidence="1">
    <location>
        <begin position="33"/>
        <end position="55"/>
    </location>
</feature>
<feature type="binding site" evidence="1">
    <location>
        <position position="33"/>
    </location>
    <ligand>
        <name>Zn(2+)</name>
        <dbReference type="ChEBI" id="CHEBI:29105"/>
    </ligand>
</feature>
<feature type="binding site" evidence="1">
    <location>
        <position position="36"/>
    </location>
    <ligand>
        <name>Zn(2+)</name>
        <dbReference type="ChEBI" id="CHEBI:29105"/>
    </ligand>
</feature>
<feature type="binding site" evidence="1">
    <location>
        <position position="52"/>
    </location>
    <ligand>
        <name>Zn(2+)</name>
        <dbReference type="ChEBI" id="CHEBI:29105"/>
    </ligand>
</feature>
<feature type="binding site" evidence="1">
    <location>
        <position position="55"/>
    </location>
    <ligand>
        <name>Zn(2+)</name>
        <dbReference type="ChEBI" id="CHEBI:29105"/>
    </ligand>
</feature>
<sequence length="292" mass="32371">MSLIDWFAARRKDQFVGKVSQDTEESDGLWVKCSECGQVAYRKDLISNFNVCSNCSHHNRINSDERINIIADKDSFKEFDDSLSPTDPLKFKDRRSYSDRIKESQEGTGLKDGVITGICSINSMPLALAVMDFRFMGGSMGSVVGEKITRIIEKATIENYPIVIVCASGGARMQEGMLSLMQMAKISGALKKHRAKNLLYMPLLTHPTTGGVTASFAMLGDLILAEPKALIGFAGRRVIEQTLREKLPDNFQTAEYLLEHGFVDVIVNRKELKSTLTSILKIHGVKDLMGAN</sequence>
<name>ACCD_PROM5</name>